<reference key="1">
    <citation type="journal article" date="2008" name="Mol. Biol. Evol.">
        <title>Genome evolution of Wolbachia strain wPip from the Culex pipiens group.</title>
        <authorList>
            <person name="Klasson L."/>
            <person name="Walker T."/>
            <person name="Sebaihia M."/>
            <person name="Sanders M.J."/>
            <person name="Quail M.A."/>
            <person name="Lord A."/>
            <person name="Sanders S."/>
            <person name="Earl J."/>
            <person name="O'Neill S.L."/>
            <person name="Thomson N."/>
            <person name="Sinkins S.P."/>
            <person name="Parkhill J."/>
        </authorList>
    </citation>
    <scope>NUCLEOTIDE SEQUENCE [LARGE SCALE GENOMIC DNA]</scope>
    <source>
        <strain>wPip</strain>
    </source>
</reference>
<protein>
    <recommendedName>
        <fullName evidence="1">Small ribosomal subunit protein bS20</fullName>
    </recommendedName>
    <alternativeName>
        <fullName evidence="2">30S ribosomal protein S20</fullName>
    </alternativeName>
</protein>
<dbReference type="EMBL" id="AM999887">
    <property type="protein sequence ID" value="CAQ55090.1"/>
    <property type="molecule type" value="Genomic_DNA"/>
</dbReference>
<dbReference type="RefSeq" id="WP_007302369.1">
    <property type="nucleotide sequence ID" value="NC_010981.1"/>
</dbReference>
<dbReference type="SMR" id="B3CMH0"/>
<dbReference type="KEGG" id="wpi:WP0982"/>
<dbReference type="eggNOG" id="COG0268">
    <property type="taxonomic scope" value="Bacteria"/>
</dbReference>
<dbReference type="HOGENOM" id="CLU_160655_3_0_5"/>
<dbReference type="Proteomes" id="UP000008814">
    <property type="component" value="Chromosome"/>
</dbReference>
<dbReference type="GO" id="GO:0005829">
    <property type="term" value="C:cytosol"/>
    <property type="evidence" value="ECO:0007669"/>
    <property type="project" value="TreeGrafter"/>
</dbReference>
<dbReference type="GO" id="GO:0015935">
    <property type="term" value="C:small ribosomal subunit"/>
    <property type="evidence" value="ECO:0007669"/>
    <property type="project" value="TreeGrafter"/>
</dbReference>
<dbReference type="GO" id="GO:0070181">
    <property type="term" value="F:small ribosomal subunit rRNA binding"/>
    <property type="evidence" value="ECO:0007669"/>
    <property type="project" value="TreeGrafter"/>
</dbReference>
<dbReference type="GO" id="GO:0003735">
    <property type="term" value="F:structural constituent of ribosome"/>
    <property type="evidence" value="ECO:0007669"/>
    <property type="project" value="InterPro"/>
</dbReference>
<dbReference type="GO" id="GO:0006412">
    <property type="term" value="P:translation"/>
    <property type="evidence" value="ECO:0007669"/>
    <property type="project" value="UniProtKB-UniRule"/>
</dbReference>
<dbReference type="FunFam" id="1.20.58.110:FF:000001">
    <property type="entry name" value="30S ribosomal protein S20"/>
    <property type="match status" value="1"/>
</dbReference>
<dbReference type="Gene3D" id="1.20.58.110">
    <property type="entry name" value="Ribosomal protein S20"/>
    <property type="match status" value="1"/>
</dbReference>
<dbReference type="HAMAP" id="MF_00500">
    <property type="entry name" value="Ribosomal_bS20"/>
    <property type="match status" value="1"/>
</dbReference>
<dbReference type="InterPro" id="IPR002583">
    <property type="entry name" value="Ribosomal_bS20"/>
</dbReference>
<dbReference type="InterPro" id="IPR036510">
    <property type="entry name" value="Ribosomal_bS20_sf"/>
</dbReference>
<dbReference type="NCBIfam" id="TIGR00029">
    <property type="entry name" value="S20"/>
    <property type="match status" value="1"/>
</dbReference>
<dbReference type="PANTHER" id="PTHR33398">
    <property type="entry name" value="30S RIBOSOMAL PROTEIN S20"/>
    <property type="match status" value="1"/>
</dbReference>
<dbReference type="PANTHER" id="PTHR33398:SF1">
    <property type="entry name" value="SMALL RIBOSOMAL SUBUNIT PROTEIN BS20C"/>
    <property type="match status" value="1"/>
</dbReference>
<dbReference type="Pfam" id="PF01649">
    <property type="entry name" value="Ribosomal_S20p"/>
    <property type="match status" value="1"/>
</dbReference>
<dbReference type="SUPFAM" id="SSF46992">
    <property type="entry name" value="Ribosomal protein S20"/>
    <property type="match status" value="1"/>
</dbReference>
<comment type="function">
    <text evidence="1">Binds directly to 16S ribosomal RNA.</text>
</comment>
<comment type="similarity">
    <text evidence="1">Belongs to the bacterial ribosomal protein bS20 family.</text>
</comment>
<keyword id="KW-0687">Ribonucleoprotein</keyword>
<keyword id="KW-0689">Ribosomal protein</keyword>
<keyword id="KW-0694">RNA-binding</keyword>
<keyword id="KW-0699">rRNA-binding</keyword>
<evidence type="ECO:0000255" key="1">
    <source>
        <dbReference type="HAMAP-Rule" id="MF_00500"/>
    </source>
</evidence>
<evidence type="ECO:0000305" key="2"/>
<accession>B3CMH0</accession>
<name>RS20_WOLPP</name>
<organism>
    <name type="scientific">Wolbachia pipientis subsp. Culex pipiens (strain wPip)</name>
    <dbReference type="NCBI Taxonomy" id="570417"/>
    <lineage>
        <taxon>Bacteria</taxon>
        <taxon>Pseudomonadati</taxon>
        <taxon>Pseudomonadota</taxon>
        <taxon>Alphaproteobacteria</taxon>
        <taxon>Rickettsiales</taxon>
        <taxon>Anaplasmataceae</taxon>
        <taxon>Wolbachieae</taxon>
        <taxon>Wolbachia</taxon>
    </lineage>
</organism>
<gene>
    <name evidence="1" type="primary">rpsT</name>
    <name type="ordered locus">WP0982</name>
</gene>
<feature type="chain" id="PRO_1000126533" description="Small ribosomal subunit protein bS20">
    <location>
        <begin position="1"/>
        <end position="89"/>
    </location>
</feature>
<sequence>MANHKSAKKMMKVIAKRTLVNKMRKSKTRTAIRRLVDIIKSGDKENVVLAFRNAESNLHKCVNKGVIHRNTAARKISRLNAKVKALMTA</sequence>
<proteinExistence type="inferred from homology"/>